<organism>
    <name type="scientific">Pseudomonas putida (strain ATCC 700007 / DSM 6899 / JCM 31910 / BCRC 17059 / LMG 24140 / F1)</name>
    <dbReference type="NCBI Taxonomy" id="351746"/>
    <lineage>
        <taxon>Bacteria</taxon>
        <taxon>Pseudomonadati</taxon>
        <taxon>Pseudomonadota</taxon>
        <taxon>Gammaproteobacteria</taxon>
        <taxon>Pseudomonadales</taxon>
        <taxon>Pseudomonadaceae</taxon>
        <taxon>Pseudomonas</taxon>
    </lineage>
</organism>
<sequence>MKDLLNLLKNQGQVEEFDAIRIGLASPEMIRSWSFGEVKKPETINYRTFKPERDGLFCAKIFGPVKDYECLCGKYKRLKHRGVICEKCGVEVALAKVRRERMAHIELASPVAHIWFLKSLPSRIGLLMDMTLRDIERVLYFESYVVIDPGMTTLEKGQLLNDEQYFEALEEFGDDFDARMGAEAVRELLHAIDLEHEIGRLREEIPQTNSETKIKKLSKRLKLMEAFQGSGNLPEWMVLTVLPVLPPDLRPLVPLDGGRFATSDLNDLYRRVINRNNRLKRLLDLSAPDIIVRNEKRMLQEAVDALLDNGRRGRAITGSNKRPLKSLADMIKGKQGRFRQNLLGKRVDYSGRSVITVGPTLRLHQCGLPKKMALELFKPFIFGKLEMRGLATTIKAAKKMVERELPEVWDVLAEVIREHPVLLNRAPTLHRLGIQAFEPVLIEGKAIQLHPLVCAAYNADFDGDQMAVHVPLTLEAQLEARALMMSTNNILSPANGEPIIVPSQDVVLGLYYMTREAINAKGEGRVFADLQEVDRVFRAGEAALHAKIKVRINETVKERDGSVVKNTRIVDTTVGRALLFQVVPAGLPYDVVNQPMKKKAISKLINQCYRVVGLKETVIFADQLMYTGFAYSTISGVSIGVNDFVIPDEKARIIGNATDEVKEIESQYASGLVTQGEKYNKVIDLWSKANDEVSKAMMANLSKEKVIDREGKEVEQESFNSMYMMADSGARGSAAQIRQLAGMRGLMAKPDGSIIETPITANFREGLSVLQYFISTHGARKGLADTALKTANSGYLTRRLVDVAQDLVVTEIDCGTDQGLVMTPHIEGGDVVEPLGERVLGRVIARDVFKPGTEDVIVPAGTLVDEQWVEFIELNSIDEVIVRSPINCETRYGICAKCYGRDLARGHQVNIGEAVGVIAAQSIGEPGTQLTMRTFHIGGAASRTSAADSVQVKNGGMVRLHNLKQVERADGNLVAVSRSGELAIADEFGRERERYKLPYGAVISVKEGEKVEAGAIVAKWDPHTHPIVTELKGTVTFVGMEENITIKRQTDELTGLTNIEVLDVKDRPAAGKEIRPAIKMVDASGKDLYLPGTDVPAQYFLPANALVGVADGAQIGVGDVIARIPQETSKTRDITGGLPRVADLFEARRPKEASILAEVSGTIAFGKETKGKRRLVITPTDGSDPYEELIPKWRHLNVFEGEQVNRGEVISDGPSDPHDILRLLGVSALAKYIVNEIQDVYRLQGVKINDKHIETILRQMLRKVEISESGDSSFIKGDQMELTQVLVENERLAGEDKFISKFTRVLLGITKASLSTESFISAASFQETTRVLTEAAVTGKRDYLRGLKENVVVGRLIPAGTGLAYHSERKRRRDADKPLRVSASEVEAALTEALNSSGN</sequence>
<protein>
    <recommendedName>
        <fullName evidence="1">DNA-directed RNA polymerase subunit beta'</fullName>
        <shortName evidence="1">RNAP subunit beta'</shortName>
        <ecNumber evidence="1">2.7.7.6</ecNumber>
    </recommendedName>
    <alternativeName>
        <fullName evidence="1">RNA polymerase subunit beta'</fullName>
    </alternativeName>
    <alternativeName>
        <fullName evidence="1">Transcriptase subunit beta'</fullName>
    </alternativeName>
</protein>
<reference key="1">
    <citation type="submission" date="2007-05" db="EMBL/GenBank/DDBJ databases">
        <title>Complete sequence of Pseudomonas putida F1.</title>
        <authorList>
            <consortium name="US DOE Joint Genome Institute"/>
            <person name="Copeland A."/>
            <person name="Lucas S."/>
            <person name="Lapidus A."/>
            <person name="Barry K."/>
            <person name="Detter J.C."/>
            <person name="Glavina del Rio T."/>
            <person name="Hammon N."/>
            <person name="Israni S."/>
            <person name="Dalin E."/>
            <person name="Tice H."/>
            <person name="Pitluck S."/>
            <person name="Chain P."/>
            <person name="Malfatti S."/>
            <person name="Shin M."/>
            <person name="Vergez L."/>
            <person name="Schmutz J."/>
            <person name="Larimer F."/>
            <person name="Land M."/>
            <person name="Hauser L."/>
            <person name="Kyrpides N."/>
            <person name="Lykidis A."/>
            <person name="Parales R."/>
            <person name="Richardson P."/>
        </authorList>
    </citation>
    <scope>NUCLEOTIDE SEQUENCE [LARGE SCALE GENOMIC DNA]</scope>
    <source>
        <strain>ATCC 700007 / DSM 6899 / JCM 31910 / BCRC 17059 / LMG 24140 / F1</strain>
    </source>
</reference>
<evidence type="ECO:0000255" key="1">
    <source>
        <dbReference type="HAMAP-Rule" id="MF_01322"/>
    </source>
</evidence>
<accession>A5VXP1</accession>
<keyword id="KW-0240">DNA-directed RNA polymerase</keyword>
<keyword id="KW-0460">Magnesium</keyword>
<keyword id="KW-0479">Metal-binding</keyword>
<keyword id="KW-0548">Nucleotidyltransferase</keyword>
<keyword id="KW-0804">Transcription</keyword>
<keyword id="KW-0808">Transferase</keyword>
<keyword id="KW-0862">Zinc</keyword>
<proteinExistence type="inferred from homology"/>
<name>RPOC_PSEP1</name>
<comment type="function">
    <text evidence="1">DNA-dependent RNA polymerase catalyzes the transcription of DNA into RNA using the four ribonucleoside triphosphates as substrates.</text>
</comment>
<comment type="catalytic activity">
    <reaction evidence="1">
        <text>RNA(n) + a ribonucleoside 5'-triphosphate = RNA(n+1) + diphosphate</text>
        <dbReference type="Rhea" id="RHEA:21248"/>
        <dbReference type="Rhea" id="RHEA-COMP:14527"/>
        <dbReference type="Rhea" id="RHEA-COMP:17342"/>
        <dbReference type="ChEBI" id="CHEBI:33019"/>
        <dbReference type="ChEBI" id="CHEBI:61557"/>
        <dbReference type="ChEBI" id="CHEBI:140395"/>
        <dbReference type="EC" id="2.7.7.6"/>
    </reaction>
</comment>
<comment type="cofactor">
    <cofactor evidence="1">
        <name>Mg(2+)</name>
        <dbReference type="ChEBI" id="CHEBI:18420"/>
    </cofactor>
    <text evidence="1">Binds 1 Mg(2+) ion per subunit.</text>
</comment>
<comment type="cofactor">
    <cofactor evidence="1">
        <name>Zn(2+)</name>
        <dbReference type="ChEBI" id="CHEBI:29105"/>
    </cofactor>
    <text evidence="1">Binds 2 Zn(2+) ions per subunit.</text>
</comment>
<comment type="subunit">
    <text evidence="1">The RNAP catalytic core consists of 2 alpha, 1 beta, 1 beta' and 1 omega subunit. When a sigma factor is associated with the core the holoenzyme is formed, which can initiate transcription.</text>
</comment>
<comment type="similarity">
    <text evidence="1">Belongs to the RNA polymerase beta' chain family.</text>
</comment>
<gene>
    <name evidence="1" type="primary">rpoC</name>
    <name type="ordered locus">Pput_0481</name>
</gene>
<dbReference type="EC" id="2.7.7.6" evidence="1"/>
<dbReference type="EMBL" id="CP000712">
    <property type="protein sequence ID" value="ABQ76651.1"/>
    <property type="molecule type" value="Genomic_DNA"/>
</dbReference>
<dbReference type="SMR" id="A5VXP1"/>
<dbReference type="KEGG" id="ppf:Pput_0481"/>
<dbReference type="eggNOG" id="COG0086">
    <property type="taxonomic scope" value="Bacteria"/>
</dbReference>
<dbReference type="HOGENOM" id="CLU_000524_3_1_6"/>
<dbReference type="GO" id="GO:0000428">
    <property type="term" value="C:DNA-directed RNA polymerase complex"/>
    <property type="evidence" value="ECO:0007669"/>
    <property type="project" value="UniProtKB-KW"/>
</dbReference>
<dbReference type="GO" id="GO:0003677">
    <property type="term" value="F:DNA binding"/>
    <property type="evidence" value="ECO:0007669"/>
    <property type="project" value="UniProtKB-UniRule"/>
</dbReference>
<dbReference type="GO" id="GO:0003899">
    <property type="term" value="F:DNA-directed RNA polymerase activity"/>
    <property type="evidence" value="ECO:0007669"/>
    <property type="project" value="UniProtKB-UniRule"/>
</dbReference>
<dbReference type="GO" id="GO:0000287">
    <property type="term" value="F:magnesium ion binding"/>
    <property type="evidence" value="ECO:0007669"/>
    <property type="project" value="UniProtKB-UniRule"/>
</dbReference>
<dbReference type="GO" id="GO:0008270">
    <property type="term" value="F:zinc ion binding"/>
    <property type="evidence" value="ECO:0007669"/>
    <property type="project" value="UniProtKB-UniRule"/>
</dbReference>
<dbReference type="GO" id="GO:0006351">
    <property type="term" value="P:DNA-templated transcription"/>
    <property type="evidence" value="ECO:0007669"/>
    <property type="project" value="UniProtKB-UniRule"/>
</dbReference>
<dbReference type="CDD" id="cd02655">
    <property type="entry name" value="RNAP_beta'_C"/>
    <property type="match status" value="1"/>
</dbReference>
<dbReference type="CDD" id="cd01609">
    <property type="entry name" value="RNAP_beta'_N"/>
    <property type="match status" value="1"/>
</dbReference>
<dbReference type="FunFam" id="1.10.132.30:FF:000003">
    <property type="entry name" value="DNA-directed RNA polymerase subunit beta"/>
    <property type="match status" value="1"/>
</dbReference>
<dbReference type="FunFam" id="1.10.150.390:FF:000002">
    <property type="entry name" value="DNA-directed RNA polymerase subunit beta"/>
    <property type="match status" value="1"/>
</dbReference>
<dbReference type="FunFam" id="1.10.40.90:FF:000001">
    <property type="entry name" value="DNA-directed RNA polymerase subunit beta"/>
    <property type="match status" value="1"/>
</dbReference>
<dbReference type="FunFam" id="4.10.860.120:FF:000001">
    <property type="entry name" value="DNA-directed RNA polymerase subunit beta"/>
    <property type="match status" value="1"/>
</dbReference>
<dbReference type="Gene3D" id="1.10.132.30">
    <property type="match status" value="1"/>
</dbReference>
<dbReference type="Gene3D" id="1.10.150.390">
    <property type="match status" value="1"/>
</dbReference>
<dbReference type="Gene3D" id="1.10.1790.20">
    <property type="match status" value="1"/>
</dbReference>
<dbReference type="Gene3D" id="1.10.40.90">
    <property type="match status" value="1"/>
</dbReference>
<dbReference type="Gene3D" id="2.40.40.20">
    <property type="match status" value="1"/>
</dbReference>
<dbReference type="Gene3D" id="2.40.50.100">
    <property type="match status" value="3"/>
</dbReference>
<dbReference type="Gene3D" id="4.10.860.120">
    <property type="entry name" value="RNA polymerase II, clamp domain"/>
    <property type="match status" value="1"/>
</dbReference>
<dbReference type="Gene3D" id="1.10.274.100">
    <property type="entry name" value="RNA polymerase Rpb1, domain 3"/>
    <property type="match status" value="2"/>
</dbReference>
<dbReference type="HAMAP" id="MF_01322">
    <property type="entry name" value="RNApol_bact_RpoC"/>
    <property type="match status" value="1"/>
</dbReference>
<dbReference type="InterPro" id="IPR045867">
    <property type="entry name" value="DNA-dir_RpoC_beta_prime"/>
</dbReference>
<dbReference type="InterPro" id="IPR012754">
    <property type="entry name" value="DNA-dir_RpoC_beta_prime_bact"/>
</dbReference>
<dbReference type="InterPro" id="IPR000722">
    <property type="entry name" value="RNA_pol_asu"/>
</dbReference>
<dbReference type="InterPro" id="IPR006592">
    <property type="entry name" value="RNA_pol_N"/>
</dbReference>
<dbReference type="InterPro" id="IPR007080">
    <property type="entry name" value="RNA_pol_Rpb1_1"/>
</dbReference>
<dbReference type="InterPro" id="IPR007066">
    <property type="entry name" value="RNA_pol_Rpb1_3"/>
</dbReference>
<dbReference type="InterPro" id="IPR042102">
    <property type="entry name" value="RNA_pol_Rpb1_3_sf"/>
</dbReference>
<dbReference type="InterPro" id="IPR007083">
    <property type="entry name" value="RNA_pol_Rpb1_4"/>
</dbReference>
<dbReference type="InterPro" id="IPR007081">
    <property type="entry name" value="RNA_pol_Rpb1_5"/>
</dbReference>
<dbReference type="InterPro" id="IPR044893">
    <property type="entry name" value="RNA_pol_Rpb1_clamp_domain"/>
</dbReference>
<dbReference type="InterPro" id="IPR038120">
    <property type="entry name" value="Rpb1_funnel_sf"/>
</dbReference>
<dbReference type="NCBIfam" id="TIGR02386">
    <property type="entry name" value="rpoC_TIGR"/>
    <property type="match status" value="1"/>
</dbReference>
<dbReference type="PANTHER" id="PTHR19376">
    <property type="entry name" value="DNA-DIRECTED RNA POLYMERASE"/>
    <property type="match status" value="1"/>
</dbReference>
<dbReference type="PANTHER" id="PTHR19376:SF54">
    <property type="entry name" value="DNA-DIRECTED RNA POLYMERASE SUBUNIT BETA"/>
    <property type="match status" value="1"/>
</dbReference>
<dbReference type="Pfam" id="PF04997">
    <property type="entry name" value="RNA_pol_Rpb1_1"/>
    <property type="match status" value="1"/>
</dbReference>
<dbReference type="Pfam" id="PF00623">
    <property type="entry name" value="RNA_pol_Rpb1_2"/>
    <property type="match status" value="2"/>
</dbReference>
<dbReference type="Pfam" id="PF04983">
    <property type="entry name" value="RNA_pol_Rpb1_3"/>
    <property type="match status" value="1"/>
</dbReference>
<dbReference type="Pfam" id="PF05000">
    <property type="entry name" value="RNA_pol_Rpb1_4"/>
    <property type="match status" value="1"/>
</dbReference>
<dbReference type="Pfam" id="PF04998">
    <property type="entry name" value="RNA_pol_Rpb1_5"/>
    <property type="match status" value="1"/>
</dbReference>
<dbReference type="SMART" id="SM00663">
    <property type="entry name" value="RPOLA_N"/>
    <property type="match status" value="1"/>
</dbReference>
<dbReference type="SUPFAM" id="SSF64484">
    <property type="entry name" value="beta and beta-prime subunits of DNA dependent RNA-polymerase"/>
    <property type="match status" value="1"/>
</dbReference>
<feature type="chain" id="PRO_1000086404" description="DNA-directed RNA polymerase subunit beta'">
    <location>
        <begin position="1"/>
        <end position="1399"/>
    </location>
</feature>
<feature type="binding site" evidence="1">
    <location>
        <position position="70"/>
    </location>
    <ligand>
        <name>Zn(2+)</name>
        <dbReference type="ChEBI" id="CHEBI:29105"/>
        <label>1</label>
    </ligand>
</feature>
<feature type="binding site" evidence="1">
    <location>
        <position position="72"/>
    </location>
    <ligand>
        <name>Zn(2+)</name>
        <dbReference type="ChEBI" id="CHEBI:29105"/>
        <label>1</label>
    </ligand>
</feature>
<feature type="binding site" evidence="1">
    <location>
        <position position="85"/>
    </location>
    <ligand>
        <name>Zn(2+)</name>
        <dbReference type="ChEBI" id="CHEBI:29105"/>
        <label>1</label>
    </ligand>
</feature>
<feature type="binding site" evidence="1">
    <location>
        <position position="88"/>
    </location>
    <ligand>
        <name>Zn(2+)</name>
        <dbReference type="ChEBI" id="CHEBI:29105"/>
        <label>1</label>
    </ligand>
</feature>
<feature type="binding site" evidence="1">
    <location>
        <position position="460"/>
    </location>
    <ligand>
        <name>Mg(2+)</name>
        <dbReference type="ChEBI" id="CHEBI:18420"/>
    </ligand>
</feature>
<feature type="binding site" evidence="1">
    <location>
        <position position="462"/>
    </location>
    <ligand>
        <name>Mg(2+)</name>
        <dbReference type="ChEBI" id="CHEBI:18420"/>
    </ligand>
</feature>
<feature type="binding site" evidence="1">
    <location>
        <position position="464"/>
    </location>
    <ligand>
        <name>Mg(2+)</name>
        <dbReference type="ChEBI" id="CHEBI:18420"/>
    </ligand>
</feature>
<feature type="binding site" evidence="1">
    <location>
        <position position="814"/>
    </location>
    <ligand>
        <name>Zn(2+)</name>
        <dbReference type="ChEBI" id="CHEBI:29105"/>
        <label>2</label>
    </ligand>
</feature>
<feature type="binding site" evidence="1">
    <location>
        <position position="888"/>
    </location>
    <ligand>
        <name>Zn(2+)</name>
        <dbReference type="ChEBI" id="CHEBI:29105"/>
        <label>2</label>
    </ligand>
</feature>
<feature type="binding site" evidence="1">
    <location>
        <position position="895"/>
    </location>
    <ligand>
        <name>Zn(2+)</name>
        <dbReference type="ChEBI" id="CHEBI:29105"/>
        <label>2</label>
    </ligand>
</feature>
<feature type="binding site" evidence="1">
    <location>
        <position position="898"/>
    </location>
    <ligand>
        <name>Zn(2+)</name>
        <dbReference type="ChEBI" id="CHEBI:29105"/>
        <label>2</label>
    </ligand>
</feature>